<organism>
    <name type="scientific">Saccharomyces cerevisiae (strain ATCC 204508 / S288c)</name>
    <name type="common">Baker's yeast</name>
    <dbReference type="NCBI Taxonomy" id="559292"/>
    <lineage>
        <taxon>Eukaryota</taxon>
        <taxon>Fungi</taxon>
        <taxon>Dikarya</taxon>
        <taxon>Ascomycota</taxon>
        <taxon>Saccharomycotina</taxon>
        <taxon>Saccharomycetes</taxon>
        <taxon>Saccharomycetales</taxon>
        <taxon>Saccharomycetaceae</taxon>
        <taxon>Saccharomyces</taxon>
    </lineage>
</organism>
<name>ORM1_YEAST</name>
<comment type="function">
    <text evidence="5 6 7">Component of the SPOTS complex that acts as a negative regulator of sphingolipid synthesis (PubMed:20182505, PubMed:34492164, PubMed:39490931). Acts by inhibiting serine palmitoyltransferases (LCB1 and LCB2) activity (PubMed:20182505). Along with ORM2, plays a role in the phosphorylation of LAC1 and YPK1, the distribution of actin patches between mother and daughter cells, and in endocytosis (PubMed:39490931). Disruption or inhibition of sphingolipid synthesis leads to the activation and phosphorylation of YPK1 through the TORC2 and PKH1 pathways, which in turn phosphorylates ORM1 and LAG1 to activate sphingolipid synthesis (PubMed:34492164).</text>
</comment>
<comment type="subunit">
    <text evidence="5">Component of the SPOTS complex, at least composed of LCB1/2 (LCB1 and/or LCB2), ORM1/2 (ORM1 and/or ORM2), SAC1 and TSC3.</text>
</comment>
<comment type="interaction">
    <interactant intactId="EBI-12592">
        <id>P53224</id>
    </interactant>
    <interactant intactId="EBI-10059">
        <id>P25045</id>
        <label>LCB1</label>
    </interactant>
    <organismsDiffer>false</organismsDiffer>
    <experiments>5</experiments>
</comment>
<comment type="interaction">
    <interactant intactId="EBI-12592">
        <id>P53224</id>
    </interactant>
    <interactant intactId="EBI-34916">
        <id>Q06144</id>
        <label>ORM2</label>
    </interactant>
    <organismsDiffer>false</organismsDiffer>
    <experiments>6</experiments>
</comment>
<comment type="subcellular location">
    <subcellularLocation>
        <location evidence="3">Endoplasmic reticulum membrane</location>
        <topology evidence="3">Multi-pass membrane protein</topology>
    </subcellularLocation>
</comment>
<comment type="PTM">
    <text evidence="5 6">Phosphorylated in case of disruption of sphingolipid synthesis (PubMed:20182505, PubMed:34492164). Phosphorylation regulates inhibitory activity of serine palmitoyltransferases (LCB1 and LCB2) (PubMed:20182505).</text>
</comment>
<comment type="disruption phenotype">
    <text evidence="7">Double knockout of ORM1 and ORM2 exhibits defect in ceramide synthesis, increasing the level of total sphingolipids and causing phytosphingosine and dihydrosphingosine to accumulate; the accumulation of phytosphingosine reduces the phosphorylation of both YPK1 and LAC1 (PubMed:39490931). The mutant also exhibits random distribution of actin patches between mother and daughter cells, and shows a defect in endocytosis (PubMed:39490931). Defects are rescued by YPK2 A-239 mutation or TSC3 deletion in ORM1 and ORM2 double knockout mutant background (PubMed:39490931).</text>
</comment>
<comment type="miscellaneous">
    <text evidence="4">Present with 2800 molecules/cell in log phase SD medium.</text>
</comment>
<comment type="similarity">
    <text evidence="8">Belongs to the ORM family.</text>
</comment>
<accession>P53224</accession>
<accession>D6VUH5</accession>
<proteinExistence type="evidence at protein level"/>
<sequence>MTELDYQGTAEAASTSYSRNQTDLKPFPSAGSASSSIKTTEPVKDHRRRRSSSIISHVEPETFEDENDQQLLPNMNATWVDQRGAWIIHVVIIILLKLFYNLFPGVTTEWSWTLTNMTYVIGSYVMFHLIKGTPFDFNGGAYDNLTMWEQIDDETLYTPSRKFLISVPIALFLVSTHYAHYDLKLFSWNCFLTTFGAVVPKLPVTHRLRISIPGITGRAQIS</sequence>
<feature type="chain" id="PRO_0000215645" description="Protein ORM1">
    <location>
        <begin position="1"/>
        <end position="222"/>
    </location>
</feature>
<feature type="topological domain" description="Cytoplasmic" evidence="1">
    <location>
        <begin position="1"/>
        <end position="85"/>
    </location>
</feature>
<feature type="transmembrane region" description="Helical" evidence="1">
    <location>
        <begin position="86"/>
        <end position="106"/>
    </location>
</feature>
<feature type="topological domain" description="Extracellular" evidence="1">
    <location>
        <begin position="107"/>
        <end position="109"/>
    </location>
</feature>
<feature type="transmembrane region" description="Helical" evidence="1">
    <location>
        <begin position="110"/>
        <end position="130"/>
    </location>
</feature>
<feature type="topological domain" description="Cytoplasmic" evidence="1">
    <location>
        <begin position="131"/>
        <end position="162"/>
    </location>
</feature>
<feature type="transmembrane region" description="Helical" evidence="1">
    <location>
        <begin position="163"/>
        <end position="183"/>
    </location>
</feature>
<feature type="topological domain" description="Extracellular" evidence="1">
    <location>
        <position position="184"/>
    </location>
</feature>
<feature type="transmembrane region" description="Helical" evidence="1">
    <location>
        <begin position="185"/>
        <end position="205"/>
    </location>
</feature>
<feature type="topological domain" description="Cytoplasmic" evidence="1">
    <location>
        <begin position="206"/>
        <end position="222"/>
    </location>
</feature>
<feature type="region of interest" description="Disordered" evidence="2">
    <location>
        <begin position="1"/>
        <end position="57"/>
    </location>
</feature>
<feature type="compositionally biased region" description="Polar residues" evidence="2">
    <location>
        <begin position="12"/>
        <end position="23"/>
    </location>
</feature>
<feature type="modified residue" description="Phosphoserine" evidence="9">
    <location>
        <position position="29"/>
    </location>
</feature>
<feature type="modified residue" description="Phosphoserine" evidence="9 10">
    <location>
        <position position="32"/>
    </location>
</feature>
<feature type="modified residue" description="Phosphoserine" evidence="10">
    <location>
        <position position="56"/>
    </location>
</feature>
<feature type="mutagenesis site" description="Induces dysregulation of sphingolipid synthesis; when associated with 32-A--A-36 and 51-A--A-53." evidence="5">
    <original>S</original>
    <variation>A</variation>
    <location>
        <position position="29"/>
    </location>
</feature>
<feature type="mutagenesis site" description="Induces dysregulation of sphingolipid synthesis; when associated with A-29 and 51-A--A-53." evidence="5">
    <original>SASSS</original>
    <variation>AAAAA</variation>
    <location>
        <begin position="32"/>
        <end position="36"/>
    </location>
</feature>
<feature type="mutagenesis site" description="Induces dysregulation of sphingolipid synthesis; when associated with A-29 and 32-A--A-36." evidence="5">
    <original>SSS</original>
    <variation>AAA</variation>
    <location>
        <begin position="51"/>
        <end position="53"/>
    </location>
</feature>
<gene>
    <name type="primary">ORM1</name>
    <name type="ordered locus">YGR038W</name>
</gene>
<keyword id="KW-0002">3D-structure</keyword>
<keyword id="KW-0254">Endocytosis</keyword>
<keyword id="KW-0256">Endoplasmic reticulum</keyword>
<keyword id="KW-0443">Lipid metabolism</keyword>
<keyword id="KW-0472">Membrane</keyword>
<keyword id="KW-0597">Phosphoprotein</keyword>
<keyword id="KW-1185">Reference proteome</keyword>
<keyword id="KW-0746">Sphingolipid metabolism</keyword>
<keyword id="KW-0812">Transmembrane</keyword>
<keyword id="KW-1133">Transmembrane helix</keyword>
<protein>
    <recommendedName>
        <fullName>Protein ORM1</fullName>
    </recommendedName>
</protein>
<evidence type="ECO:0000255" key="1"/>
<evidence type="ECO:0000256" key="2">
    <source>
        <dbReference type="SAM" id="MobiDB-lite"/>
    </source>
</evidence>
<evidence type="ECO:0000269" key="3">
    <source>
    </source>
</evidence>
<evidence type="ECO:0000269" key="4">
    <source>
    </source>
</evidence>
<evidence type="ECO:0000269" key="5">
    <source>
    </source>
</evidence>
<evidence type="ECO:0000269" key="6">
    <source>
    </source>
</evidence>
<evidence type="ECO:0000269" key="7">
    <source>
    </source>
</evidence>
<evidence type="ECO:0000305" key="8"/>
<evidence type="ECO:0007744" key="9">
    <source>
    </source>
</evidence>
<evidence type="ECO:0007744" key="10">
    <source>
    </source>
</evidence>
<reference key="1">
    <citation type="journal article" date="1997" name="Yeast">
        <title>Sequence analysis of 203 kilobases from Saccharomyces cerevisiae chromosome VII.</title>
        <authorList>
            <person name="Rieger M."/>
            <person name="Brueckner M."/>
            <person name="Schaefer M."/>
            <person name="Mueller-Auer S."/>
        </authorList>
    </citation>
    <scope>NUCLEOTIDE SEQUENCE [GENOMIC DNA]</scope>
    <source>
        <strain>ATCC 204508 / S288c</strain>
    </source>
</reference>
<reference key="2">
    <citation type="journal article" date="1997" name="Nature">
        <title>The nucleotide sequence of Saccharomyces cerevisiae chromosome VII.</title>
        <authorList>
            <person name="Tettelin H."/>
            <person name="Agostoni-Carbone M.L."/>
            <person name="Albermann K."/>
            <person name="Albers M."/>
            <person name="Arroyo J."/>
            <person name="Backes U."/>
            <person name="Barreiros T."/>
            <person name="Bertani I."/>
            <person name="Bjourson A.J."/>
            <person name="Brueckner M."/>
            <person name="Bruschi C.V."/>
            <person name="Carignani G."/>
            <person name="Castagnoli L."/>
            <person name="Cerdan E."/>
            <person name="Clemente M.L."/>
            <person name="Coblenz A."/>
            <person name="Coglievina M."/>
            <person name="Coissac E."/>
            <person name="Defoor E."/>
            <person name="Del Bino S."/>
            <person name="Delius H."/>
            <person name="Delneri D."/>
            <person name="de Wergifosse P."/>
            <person name="Dujon B."/>
            <person name="Durand P."/>
            <person name="Entian K.-D."/>
            <person name="Eraso P."/>
            <person name="Escribano V."/>
            <person name="Fabiani L."/>
            <person name="Fartmann B."/>
            <person name="Feroli F."/>
            <person name="Feuermann M."/>
            <person name="Frontali L."/>
            <person name="Garcia-Gonzalez M."/>
            <person name="Garcia-Saez M.I."/>
            <person name="Goffeau A."/>
            <person name="Guerreiro P."/>
            <person name="Hani J."/>
            <person name="Hansen M."/>
            <person name="Hebling U."/>
            <person name="Hernandez K."/>
            <person name="Heumann K."/>
            <person name="Hilger F."/>
            <person name="Hofmann B."/>
            <person name="Indge K.J."/>
            <person name="James C.M."/>
            <person name="Klima R."/>
            <person name="Koetter P."/>
            <person name="Kramer B."/>
            <person name="Kramer W."/>
            <person name="Lauquin G."/>
            <person name="Leuther H."/>
            <person name="Louis E.J."/>
            <person name="Maillier E."/>
            <person name="Marconi A."/>
            <person name="Martegani E."/>
            <person name="Mazon M.J."/>
            <person name="Mazzoni C."/>
            <person name="McReynolds A.D.K."/>
            <person name="Melchioretto P."/>
            <person name="Mewes H.-W."/>
            <person name="Minenkova O."/>
            <person name="Mueller-Auer S."/>
            <person name="Nawrocki A."/>
            <person name="Netter P."/>
            <person name="Neu R."/>
            <person name="Nombela C."/>
            <person name="Oliver S.G."/>
            <person name="Panzeri L."/>
            <person name="Paoluzi S."/>
            <person name="Plevani P."/>
            <person name="Portetelle D."/>
            <person name="Portillo F."/>
            <person name="Potier S."/>
            <person name="Purnelle B."/>
            <person name="Rieger M."/>
            <person name="Riles L."/>
            <person name="Rinaldi T."/>
            <person name="Robben J."/>
            <person name="Rodrigues-Pousada C."/>
            <person name="Rodriguez-Belmonte E."/>
            <person name="Rodriguez-Torres A.M."/>
            <person name="Rose M."/>
            <person name="Ruzzi M."/>
            <person name="Saliola M."/>
            <person name="Sanchez-Perez M."/>
            <person name="Schaefer B."/>
            <person name="Schaefer M."/>
            <person name="Scharfe M."/>
            <person name="Schmidheini T."/>
            <person name="Schreer A."/>
            <person name="Skala J."/>
            <person name="Souciet J.-L."/>
            <person name="Steensma H.Y."/>
            <person name="Talla E."/>
            <person name="Thierry A."/>
            <person name="Vandenbol M."/>
            <person name="van der Aart Q.J.M."/>
            <person name="Van Dyck L."/>
            <person name="Vanoni M."/>
            <person name="Verhasselt P."/>
            <person name="Voet M."/>
            <person name="Volckaert G."/>
            <person name="Wambutt R."/>
            <person name="Watson M.D."/>
            <person name="Weber N."/>
            <person name="Wedler E."/>
            <person name="Wedler H."/>
            <person name="Wipfli P."/>
            <person name="Wolf K."/>
            <person name="Wright L.F."/>
            <person name="Zaccaria P."/>
            <person name="Zimmermann M."/>
            <person name="Zollner A."/>
            <person name="Kleine K."/>
        </authorList>
    </citation>
    <scope>NUCLEOTIDE SEQUENCE [LARGE SCALE GENOMIC DNA]</scope>
    <source>
        <strain>ATCC 204508 / S288c</strain>
    </source>
</reference>
<reference key="3">
    <citation type="journal article" date="2014" name="G3 (Bethesda)">
        <title>The reference genome sequence of Saccharomyces cerevisiae: Then and now.</title>
        <authorList>
            <person name="Engel S.R."/>
            <person name="Dietrich F.S."/>
            <person name="Fisk D.G."/>
            <person name="Binkley G."/>
            <person name="Balakrishnan R."/>
            <person name="Costanzo M.C."/>
            <person name="Dwight S.S."/>
            <person name="Hitz B.C."/>
            <person name="Karra K."/>
            <person name="Nash R.S."/>
            <person name="Weng S."/>
            <person name="Wong E.D."/>
            <person name="Lloyd P."/>
            <person name="Skrzypek M.S."/>
            <person name="Miyasato S.R."/>
            <person name="Simison M."/>
            <person name="Cherry J.M."/>
        </authorList>
    </citation>
    <scope>GENOME REANNOTATION</scope>
    <source>
        <strain>ATCC 204508 / S288c</strain>
    </source>
</reference>
<reference key="4">
    <citation type="journal article" date="1997" name="Yeast">
        <title>Saccharomyces carlsbergensis contains two functional genes encoding the acyl-CoA binding protein, one similar to the ACB1 gene from S. cerevisiae and one identical to the ACB1 gene from S. monacensis.</title>
        <authorList>
            <person name="Borsting C."/>
            <person name="Hummel R."/>
            <person name="Schultz E.R."/>
            <person name="Rose T.M."/>
            <person name="Pedersen M.B."/>
            <person name="Knudsen J."/>
            <person name="Kristiansen K."/>
        </authorList>
    </citation>
    <scope>NUCLEOTIDE SEQUENCE [GENOMIC DNA] OF 75-222</scope>
    <source>
        <strain>ATCC 26109 / X2180</strain>
    </source>
</reference>
<reference key="5">
    <citation type="journal article" date="2003" name="Nature">
        <title>Global analysis of protein localization in budding yeast.</title>
        <authorList>
            <person name="Huh W.-K."/>
            <person name="Falvo J.V."/>
            <person name="Gerke L.C."/>
            <person name="Carroll A.S."/>
            <person name="Howson R.W."/>
            <person name="Weissman J.S."/>
            <person name="O'Shea E.K."/>
        </authorList>
    </citation>
    <scope>SUBCELLULAR LOCATION [LARGE SCALE ANALYSIS]</scope>
</reference>
<reference key="6">
    <citation type="journal article" date="2003" name="Nature">
        <title>Global analysis of protein expression in yeast.</title>
        <authorList>
            <person name="Ghaemmaghami S."/>
            <person name="Huh W.-K."/>
            <person name="Bower K."/>
            <person name="Howson R.W."/>
            <person name="Belle A."/>
            <person name="Dephoure N."/>
            <person name="O'Shea E.K."/>
            <person name="Weissman J.S."/>
        </authorList>
    </citation>
    <scope>LEVEL OF PROTEIN EXPRESSION [LARGE SCALE ANALYSIS]</scope>
</reference>
<reference key="7">
    <citation type="journal article" date="2006" name="Proc. Natl. Acad. Sci. U.S.A.">
        <title>A global topology map of the Saccharomyces cerevisiae membrane proteome.</title>
        <authorList>
            <person name="Kim H."/>
            <person name="Melen K."/>
            <person name="Oesterberg M."/>
            <person name="von Heijne G."/>
        </authorList>
    </citation>
    <scope>TOPOLOGY [LARGE SCALE ANALYSIS]</scope>
    <source>
        <strain>ATCC 208353 / W303-1A</strain>
    </source>
</reference>
<reference key="8">
    <citation type="journal article" date="2007" name="J. Proteome Res.">
        <title>Large-scale phosphorylation analysis of alpha-factor-arrested Saccharomyces cerevisiae.</title>
        <authorList>
            <person name="Li X."/>
            <person name="Gerber S.A."/>
            <person name="Rudner A.D."/>
            <person name="Beausoleil S.A."/>
            <person name="Haas W."/>
            <person name="Villen J."/>
            <person name="Elias J.E."/>
            <person name="Gygi S.P."/>
        </authorList>
    </citation>
    <scope>PHOSPHORYLATION [LARGE SCALE ANALYSIS] AT SER-29 AND SER-32</scope>
    <scope>IDENTIFICATION BY MASS SPECTROMETRY [LARGE SCALE ANALYSIS]</scope>
    <source>
        <strain>ADR376</strain>
    </source>
</reference>
<reference key="9">
    <citation type="journal article" date="2008" name="Mol. Cell. Proteomics">
        <title>A multidimensional chromatography technology for in-depth phosphoproteome analysis.</title>
        <authorList>
            <person name="Albuquerque C.P."/>
            <person name="Smolka M.B."/>
            <person name="Payne S.H."/>
            <person name="Bafna V."/>
            <person name="Eng J."/>
            <person name="Zhou H."/>
        </authorList>
    </citation>
    <scope>IDENTIFICATION BY MASS SPECTROMETRY [LARGE SCALE ANALYSIS]</scope>
</reference>
<reference key="10">
    <citation type="journal article" date="2009" name="Science">
        <title>Global analysis of Cdk1 substrate phosphorylation sites provides insights into evolution.</title>
        <authorList>
            <person name="Holt L.J."/>
            <person name="Tuch B.B."/>
            <person name="Villen J."/>
            <person name="Johnson A.D."/>
            <person name="Gygi S.P."/>
            <person name="Morgan D.O."/>
        </authorList>
    </citation>
    <scope>PHOSPHORYLATION [LARGE SCALE ANALYSIS] AT SER-32 AND SER-56</scope>
    <scope>IDENTIFICATION BY MASS SPECTROMETRY [LARGE SCALE ANALYSIS]</scope>
</reference>
<reference key="11">
    <citation type="journal article" date="2010" name="Nature">
        <title>Orm family proteins mediate sphingolipid homeostasis.</title>
        <authorList>
            <person name="Breslow D.K."/>
            <person name="Collins S.R."/>
            <person name="Bodenmiller B."/>
            <person name="Aebersold R."/>
            <person name="Simons K."/>
            <person name="Shevchenko A."/>
            <person name="Ejsing C.S."/>
            <person name="Weissman J.S."/>
        </authorList>
    </citation>
    <scope>FUNCTION</scope>
    <scope>PHOSPHORYLATION</scope>
    <scope>IDENTIFICATION IN THE SPOTS COMPLEX</scope>
    <scope>MUTAGENESIS OF SER-29; 32-SER--SER-36 AND 51-SER--SER-53</scope>
</reference>
<reference key="12">
    <citation type="journal article" date="2012" name="Proc. Natl. Acad. Sci. U.S.A.">
        <title>N-terminal acetylome analyses and functional insights of the N-terminal acetyltransferase NatB.</title>
        <authorList>
            <person name="Van Damme P."/>
            <person name="Lasa M."/>
            <person name="Polevoda B."/>
            <person name="Gazquez C."/>
            <person name="Elosegui-Artola A."/>
            <person name="Kim D.S."/>
            <person name="De Juan-Pardo E."/>
            <person name="Demeyer K."/>
            <person name="Hole K."/>
            <person name="Larrea E."/>
            <person name="Timmerman E."/>
            <person name="Prieto J."/>
            <person name="Arnesen T."/>
            <person name="Sherman F."/>
            <person name="Gevaert K."/>
            <person name="Aldabe R."/>
        </authorList>
    </citation>
    <scope>IDENTIFICATION BY MASS SPECTROMETRY [LARGE SCALE ANALYSIS]</scope>
</reference>
<reference evidence="8" key="13">
    <citation type="journal article" date="2022" name="FEBS J.">
        <title>Regulation of sphingolipid biosynthesis in the endoplasmic reticulum via signals from the plasma membrane in budding yeast.</title>
        <authorList>
            <person name="Ishino Y."/>
            <person name="Komatsu N."/>
            <person name="Sakata K.T."/>
            <person name="Yoshikawa D."/>
            <person name="Tani M."/>
            <person name="Maeda T."/>
            <person name="Morishige K."/>
            <person name="Yoshizawa K."/>
            <person name="Tanaka N."/>
            <person name="Tabuchi M."/>
        </authorList>
    </citation>
    <scope>FUNCTION</scope>
    <scope>PHOSPHORYLATION</scope>
</reference>
<reference evidence="8" key="14">
    <citation type="journal article" date="2024" name="J. Lipid Res.">
        <title>Orm proteins control ceramide synthesis and endocytosis via LCB-mediated Ypk1 regulation.</title>
        <authorList>
            <person name="Ren J."/>
            <person name="Rieger R."/>
            <person name="Pereira de Sa N."/>
            <person name="Kelapire D."/>
            <person name="Del Poeta M."/>
            <person name="Hannun Y.A."/>
        </authorList>
    </citation>
    <scope>FUNCTION</scope>
    <scope>DISRUPTION PHENOTYPE</scope>
</reference>
<dbReference type="EMBL" id="Z72823">
    <property type="protein sequence ID" value="CAA97026.1"/>
    <property type="molecule type" value="Genomic_DNA"/>
</dbReference>
<dbReference type="EMBL" id="Y08687">
    <property type="protein sequence ID" value="CAA69943.1"/>
    <property type="molecule type" value="Genomic_DNA"/>
</dbReference>
<dbReference type="EMBL" id="BK006941">
    <property type="protein sequence ID" value="DAA08136.1"/>
    <property type="molecule type" value="Genomic_DNA"/>
</dbReference>
<dbReference type="PIR" id="S64329">
    <property type="entry name" value="S64329"/>
</dbReference>
<dbReference type="RefSeq" id="NP_011552.1">
    <property type="nucleotide sequence ID" value="NM_001181167.1"/>
</dbReference>
<dbReference type="PDB" id="8C80">
    <property type="method" value="EM"/>
    <property type="resolution" value="3.40 A"/>
    <property type="chains" value="A=1-222"/>
</dbReference>
<dbReference type="PDB" id="8C81">
    <property type="method" value="EM"/>
    <property type="resolution" value="3.30 A"/>
    <property type="chains" value="A=1-222"/>
</dbReference>
<dbReference type="PDB" id="8C82">
    <property type="method" value="EM"/>
    <property type="resolution" value="3.40 A"/>
    <property type="chains" value="A/E=1-222"/>
</dbReference>
<dbReference type="PDBsum" id="8C80"/>
<dbReference type="PDBsum" id="8C81"/>
<dbReference type="PDBsum" id="8C82"/>
<dbReference type="EMDB" id="EMD-16467"/>
<dbReference type="EMDB" id="EMD-16468"/>
<dbReference type="EMDB" id="EMD-16469"/>
<dbReference type="SMR" id="P53224"/>
<dbReference type="BioGRID" id="33283">
    <property type="interactions" value="137"/>
</dbReference>
<dbReference type="ComplexPortal" id="CPX-3158">
    <property type="entry name" value="SPOTS complex"/>
</dbReference>
<dbReference type="DIP" id="DIP-8124N"/>
<dbReference type="FunCoup" id="P53224">
    <property type="interactions" value="546"/>
</dbReference>
<dbReference type="IntAct" id="P53224">
    <property type="interactions" value="8"/>
</dbReference>
<dbReference type="STRING" id="4932.YGR038W"/>
<dbReference type="iPTMnet" id="P53224"/>
<dbReference type="PaxDb" id="4932-YGR038W"/>
<dbReference type="PeptideAtlas" id="P53224"/>
<dbReference type="EnsemblFungi" id="YGR038W_mRNA">
    <property type="protein sequence ID" value="YGR038W"/>
    <property type="gene ID" value="YGR038W"/>
</dbReference>
<dbReference type="GeneID" id="852926"/>
<dbReference type="KEGG" id="sce:YGR038W"/>
<dbReference type="AGR" id="SGD:S000003270"/>
<dbReference type="SGD" id="S000003270">
    <property type="gene designation" value="ORM1"/>
</dbReference>
<dbReference type="VEuPathDB" id="FungiDB:YGR038W"/>
<dbReference type="eggNOG" id="KOG3319">
    <property type="taxonomic scope" value="Eukaryota"/>
</dbReference>
<dbReference type="GeneTree" id="ENSGT00950000183178"/>
<dbReference type="HOGENOM" id="CLU_072117_2_1_1"/>
<dbReference type="InParanoid" id="P53224"/>
<dbReference type="OMA" id="STHYTHF"/>
<dbReference type="OrthoDB" id="1932233at2759"/>
<dbReference type="BioCyc" id="YEAST:G3O-30759-MONOMER"/>
<dbReference type="Reactome" id="R-SCE-6798695">
    <property type="pathway name" value="Neutrophil degranulation"/>
</dbReference>
<dbReference type="BioGRID-ORCS" id="852926">
    <property type="hits" value="0 hits in 10 CRISPR screens"/>
</dbReference>
<dbReference type="PRO" id="PR:P53224"/>
<dbReference type="Proteomes" id="UP000002311">
    <property type="component" value="Chromosome VII"/>
</dbReference>
<dbReference type="RNAct" id="P53224">
    <property type="molecule type" value="protein"/>
</dbReference>
<dbReference type="GO" id="GO:0005783">
    <property type="term" value="C:endoplasmic reticulum"/>
    <property type="evidence" value="ECO:0000314"/>
    <property type="project" value="SGD"/>
</dbReference>
<dbReference type="GO" id="GO:0005789">
    <property type="term" value="C:endoplasmic reticulum membrane"/>
    <property type="evidence" value="ECO:0007669"/>
    <property type="project" value="UniProtKB-SubCell"/>
</dbReference>
<dbReference type="GO" id="GO:0017059">
    <property type="term" value="C:serine palmitoyltransferase complex"/>
    <property type="evidence" value="ECO:0000314"/>
    <property type="project" value="UniProtKB"/>
</dbReference>
<dbReference type="GO" id="GO:0006672">
    <property type="term" value="P:ceramide metabolic process"/>
    <property type="evidence" value="ECO:0000318"/>
    <property type="project" value="GO_Central"/>
</dbReference>
<dbReference type="GO" id="GO:0090156">
    <property type="term" value="P:intracellular sphingolipid homeostasis"/>
    <property type="evidence" value="ECO:0000315"/>
    <property type="project" value="UniProtKB"/>
</dbReference>
<dbReference type="GO" id="GO:0090155">
    <property type="term" value="P:negative regulation of sphingolipid biosynthetic process"/>
    <property type="evidence" value="ECO:0000315"/>
    <property type="project" value="UniProtKB"/>
</dbReference>
<dbReference type="GO" id="GO:0006986">
    <property type="term" value="P:response to unfolded protein"/>
    <property type="evidence" value="ECO:0000315"/>
    <property type="project" value="SGD"/>
</dbReference>
<dbReference type="GO" id="GO:0030148">
    <property type="term" value="P:sphingolipid biosynthetic process"/>
    <property type="evidence" value="ECO:0000318"/>
    <property type="project" value="GO_Central"/>
</dbReference>
<dbReference type="InterPro" id="IPR007203">
    <property type="entry name" value="ORMDL"/>
</dbReference>
<dbReference type="PANTHER" id="PTHR12665">
    <property type="entry name" value="ORMDL PROTEINS"/>
    <property type="match status" value="1"/>
</dbReference>
<dbReference type="Pfam" id="PF04061">
    <property type="entry name" value="ORMDL"/>
    <property type="match status" value="1"/>
</dbReference>
<dbReference type="PIRSF" id="PIRSF018147">
    <property type="entry name" value="ORMDL"/>
    <property type="match status" value="1"/>
</dbReference>